<organism>
    <name type="scientific">Methanococcus maripaludis (strain C6 / ATCC BAA-1332)</name>
    <dbReference type="NCBI Taxonomy" id="444158"/>
    <lineage>
        <taxon>Archaea</taxon>
        <taxon>Methanobacteriati</taxon>
        <taxon>Methanobacteriota</taxon>
        <taxon>Methanomada group</taxon>
        <taxon>Methanococci</taxon>
        <taxon>Methanococcales</taxon>
        <taxon>Methanococcaceae</taxon>
        <taxon>Methanococcus</taxon>
    </lineage>
</organism>
<evidence type="ECO:0000255" key="1">
    <source>
        <dbReference type="HAMAP-Rule" id="MF_01278"/>
    </source>
</evidence>
<sequence>MRFKLDGRIIFSKDVEEETQKDIVEVLENGDIFLKGVPEGKENEASKIETYEFDGKDLKLKMTSGTYTRAHEGIVRLKKPIMEKVGRKHQIGIRDVAIDRYVVTITAEPSKVSELKGLKVPECEVELEGEKINIVFENLGDGELKRNIIDRAIKFVKNELDKQDKDLTFEVCKIAPGTIVSDYKAKREITFDTDPTELAEPYGWVKRFPGRGQWFYTAPMAKLFRAFESLIIEECIDKIGFDECLFPKLIPLDVMYKMRYLEGLPEGMYYVCPPKREPEMFQDFVNEMMIKKEIPIEKLKTLLRDPAYVLAPAQCEPFYTFFDHELVDVDHPSKFFDKSGWTYRWEGGGAKGLDRVNEFLRGECVWMGTPEFVETVRDDTLKYAENLAEKLDLEYWTEVGDDPFYLEGRKTEARGIEFPDVPKYEMRLWLPHIKEERKGVAVTSANIHGTHFVEGFGIKDYKERKVWTGCTGYGLTRWVIGFLAQYGYNYDDWPELIQKKVGKLPEIPKLITWP</sequence>
<proteinExistence type="inferred from homology"/>
<accession>A9AB64</accession>
<gene>
    <name evidence="1" type="primary">serS</name>
    <name type="ordered locus">MmarC6_1776</name>
</gene>
<keyword id="KW-0030">Aminoacyl-tRNA synthetase</keyword>
<keyword id="KW-0067">ATP-binding</keyword>
<keyword id="KW-0963">Cytoplasm</keyword>
<keyword id="KW-0436">Ligase</keyword>
<keyword id="KW-0479">Metal-binding</keyword>
<keyword id="KW-0547">Nucleotide-binding</keyword>
<keyword id="KW-0648">Protein biosynthesis</keyword>
<keyword id="KW-0862">Zinc</keyword>
<name>SYS2_METM6</name>
<protein>
    <recommendedName>
        <fullName evidence="1">Type-2 serine--tRNA ligase</fullName>
        <ecNumber evidence="1">6.1.1.11</ecNumber>
    </recommendedName>
    <alternativeName>
        <fullName evidence="1">Seryl-tRNA synthetase</fullName>
        <shortName evidence="1">SerRS</shortName>
    </alternativeName>
    <alternativeName>
        <fullName evidence="1">Seryl-tRNA(Ser/Sec) synthetase</fullName>
    </alternativeName>
</protein>
<comment type="function">
    <text evidence="1">Catalyzes the attachment of serine to tRNA(Ser). Is also able to aminoacylate tRNA(Sec) with serine, to form the misacylated tRNA L-seryl-tRNA(Sec), which will be further converted into selenocysteinyl-tRNA(Sec).</text>
</comment>
<comment type="catalytic activity">
    <reaction evidence="1">
        <text>tRNA(Ser) + L-serine + ATP = L-seryl-tRNA(Ser) + AMP + diphosphate + H(+)</text>
        <dbReference type="Rhea" id="RHEA:12292"/>
        <dbReference type="Rhea" id="RHEA-COMP:9669"/>
        <dbReference type="Rhea" id="RHEA-COMP:9703"/>
        <dbReference type="ChEBI" id="CHEBI:15378"/>
        <dbReference type="ChEBI" id="CHEBI:30616"/>
        <dbReference type="ChEBI" id="CHEBI:33019"/>
        <dbReference type="ChEBI" id="CHEBI:33384"/>
        <dbReference type="ChEBI" id="CHEBI:78442"/>
        <dbReference type="ChEBI" id="CHEBI:78533"/>
        <dbReference type="ChEBI" id="CHEBI:456215"/>
        <dbReference type="EC" id="6.1.1.11"/>
    </reaction>
</comment>
<comment type="catalytic activity">
    <reaction evidence="1">
        <text>tRNA(Sec) + L-serine + ATP = L-seryl-tRNA(Sec) + AMP + diphosphate + H(+)</text>
        <dbReference type="Rhea" id="RHEA:42580"/>
        <dbReference type="Rhea" id="RHEA-COMP:9742"/>
        <dbReference type="Rhea" id="RHEA-COMP:10128"/>
        <dbReference type="ChEBI" id="CHEBI:15378"/>
        <dbReference type="ChEBI" id="CHEBI:30616"/>
        <dbReference type="ChEBI" id="CHEBI:33019"/>
        <dbReference type="ChEBI" id="CHEBI:33384"/>
        <dbReference type="ChEBI" id="CHEBI:78442"/>
        <dbReference type="ChEBI" id="CHEBI:78533"/>
        <dbReference type="ChEBI" id="CHEBI:456215"/>
        <dbReference type="EC" id="6.1.1.11"/>
    </reaction>
</comment>
<comment type="cofactor">
    <cofactor evidence="1">
        <name>Zn(2+)</name>
        <dbReference type="ChEBI" id="CHEBI:29105"/>
    </cofactor>
    <text evidence="1">Binds 1 Zn(2+) ion per subunit. This ion is coordinated with 2 cysteines, 1 glutamate and a water molecule that dissociates from the zinc ion to allow the coordination of the amino group of the serine substrate, which is essential for catalysis.</text>
</comment>
<comment type="pathway">
    <text evidence="1">Aminoacyl-tRNA biosynthesis; selenocysteinyl-tRNA(Sec) biosynthesis; L-seryl-tRNA(Sec) from L-serine and tRNA(Sec): step 1/1.</text>
</comment>
<comment type="subunit">
    <text evidence="1">Homodimer.</text>
</comment>
<comment type="subcellular location">
    <subcellularLocation>
        <location evidence="1">Cytoplasm</location>
    </subcellularLocation>
</comment>
<comment type="domain">
    <text evidence="1">Consists of two distinct domains, a catalytic core and a N-terminal extension that is presumably involved in tRNA binding.</text>
</comment>
<comment type="similarity">
    <text evidence="1">Belongs to the class-II aminoacyl-tRNA synthetase family. Type-2 seryl-tRNA synthetase subfamily.</text>
</comment>
<dbReference type="EC" id="6.1.1.11" evidence="1"/>
<dbReference type="EMBL" id="CP000867">
    <property type="protein sequence ID" value="ABX02587.1"/>
    <property type="molecule type" value="Genomic_DNA"/>
</dbReference>
<dbReference type="SMR" id="A9AB64"/>
<dbReference type="STRING" id="444158.MmarC6_1776"/>
<dbReference type="KEGG" id="mmx:MmarC6_1776"/>
<dbReference type="eggNOG" id="arCOG00403">
    <property type="taxonomic scope" value="Archaea"/>
</dbReference>
<dbReference type="HOGENOM" id="CLU_542524_0_0_2"/>
<dbReference type="OrthoDB" id="115981at2157"/>
<dbReference type="PhylomeDB" id="A9AB64"/>
<dbReference type="UniPathway" id="UPA00906">
    <property type="reaction ID" value="UER00895"/>
</dbReference>
<dbReference type="GO" id="GO:0005737">
    <property type="term" value="C:cytoplasm"/>
    <property type="evidence" value="ECO:0007669"/>
    <property type="project" value="UniProtKB-SubCell"/>
</dbReference>
<dbReference type="GO" id="GO:0005524">
    <property type="term" value="F:ATP binding"/>
    <property type="evidence" value="ECO:0007669"/>
    <property type="project" value="UniProtKB-UniRule"/>
</dbReference>
<dbReference type="GO" id="GO:0004828">
    <property type="term" value="F:serine-tRNA ligase activity"/>
    <property type="evidence" value="ECO:0007669"/>
    <property type="project" value="UniProtKB-UniRule"/>
</dbReference>
<dbReference type="GO" id="GO:0008270">
    <property type="term" value="F:zinc ion binding"/>
    <property type="evidence" value="ECO:0007669"/>
    <property type="project" value="UniProtKB-UniRule"/>
</dbReference>
<dbReference type="GO" id="GO:0016260">
    <property type="term" value="P:selenocysteine biosynthetic process"/>
    <property type="evidence" value="ECO:0007669"/>
    <property type="project" value="UniProtKB-UniRule"/>
</dbReference>
<dbReference type="GO" id="GO:0006434">
    <property type="term" value="P:seryl-tRNA aminoacylation"/>
    <property type="evidence" value="ECO:0007669"/>
    <property type="project" value="UniProtKB-UniRule"/>
</dbReference>
<dbReference type="CDD" id="cd00670">
    <property type="entry name" value="Gly_His_Pro_Ser_Thr_tRS_core"/>
    <property type="match status" value="1"/>
</dbReference>
<dbReference type="Gene3D" id="3.30.70.1920">
    <property type="match status" value="1"/>
</dbReference>
<dbReference type="Gene3D" id="3.30.930.10">
    <property type="entry name" value="Bira Bifunctional Protein, Domain 2"/>
    <property type="match status" value="1"/>
</dbReference>
<dbReference type="HAMAP" id="MF_01278">
    <property type="entry name" value="Ser_tRNA_synth_type2"/>
    <property type="match status" value="1"/>
</dbReference>
<dbReference type="InterPro" id="IPR002314">
    <property type="entry name" value="aa-tRNA-synt_IIb"/>
</dbReference>
<dbReference type="InterPro" id="IPR045864">
    <property type="entry name" value="aa-tRNA-synth_II/BPL/LPL"/>
</dbReference>
<dbReference type="InterPro" id="IPR004503">
    <property type="entry name" value="Ser-tRNA-ligase_2_arc"/>
</dbReference>
<dbReference type="InterPro" id="IPR041293">
    <property type="entry name" value="SerS_tRNA-bd"/>
</dbReference>
<dbReference type="NCBIfam" id="NF002120">
    <property type="entry name" value="PRK00960.1"/>
    <property type="match status" value="1"/>
</dbReference>
<dbReference type="NCBIfam" id="TIGR00415">
    <property type="entry name" value="serS_MJ"/>
    <property type="match status" value="1"/>
</dbReference>
<dbReference type="Pfam" id="PF00587">
    <property type="entry name" value="tRNA-synt_2b"/>
    <property type="match status" value="1"/>
</dbReference>
<dbReference type="Pfam" id="PF18490">
    <property type="entry name" value="tRNA_bind_4"/>
    <property type="match status" value="1"/>
</dbReference>
<dbReference type="SUPFAM" id="SSF55681">
    <property type="entry name" value="Class II aaRS and biotin synthetases"/>
    <property type="match status" value="1"/>
</dbReference>
<reference key="1">
    <citation type="submission" date="2007-10" db="EMBL/GenBank/DDBJ databases">
        <title>Complete sequence of Methanococcus maripaludis C6.</title>
        <authorList>
            <consortium name="US DOE Joint Genome Institute"/>
            <person name="Copeland A."/>
            <person name="Lucas S."/>
            <person name="Lapidus A."/>
            <person name="Barry K."/>
            <person name="Glavina del Rio T."/>
            <person name="Dalin E."/>
            <person name="Tice H."/>
            <person name="Pitluck S."/>
            <person name="Clum A."/>
            <person name="Schmutz J."/>
            <person name="Larimer F."/>
            <person name="Land M."/>
            <person name="Hauser L."/>
            <person name="Kyrpides N."/>
            <person name="Mikhailova N."/>
            <person name="Sieprawska-Lupa M."/>
            <person name="Whitman W.B."/>
            <person name="Richardson P."/>
        </authorList>
    </citation>
    <scope>NUCLEOTIDE SEQUENCE [LARGE SCALE GENOMIC DNA]</scope>
    <source>
        <strain>C6 / ATCC BAA-1332</strain>
    </source>
</reference>
<feature type="chain" id="PRO_1000165222" description="Type-2 serine--tRNA ligase">
    <location>
        <begin position="1"/>
        <end position="514"/>
    </location>
</feature>
<feature type="binding site" evidence="1">
    <location>
        <position position="313"/>
    </location>
    <ligand>
        <name>L-serine</name>
        <dbReference type="ChEBI" id="CHEBI:33384"/>
    </ligand>
</feature>
<feature type="binding site" evidence="1">
    <location>
        <position position="315"/>
    </location>
    <ligand>
        <name>Zn(2+)</name>
        <dbReference type="ChEBI" id="CHEBI:29105"/>
        <note>catalytic</note>
    </ligand>
</feature>
<feature type="binding site" evidence="1">
    <location>
        <begin position="344"/>
        <end position="346"/>
    </location>
    <ligand>
        <name>ATP</name>
        <dbReference type="ChEBI" id="CHEBI:30616"/>
    </ligand>
</feature>
<feature type="binding site" evidence="1">
    <location>
        <position position="344"/>
    </location>
    <ligand>
        <name>L-serine</name>
        <dbReference type="ChEBI" id="CHEBI:33384"/>
    </ligand>
</feature>
<feature type="binding site" evidence="1">
    <location>
        <begin position="355"/>
        <end position="356"/>
    </location>
    <ligand>
        <name>ATP</name>
        <dbReference type="ChEBI" id="CHEBI:30616"/>
    </ligand>
</feature>
<feature type="binding site" evidence="1">
    <location>
        <begin position="361"/>
        <end position="363"/>
    </location>
    <ligand>
        <name>L-serine</name>
        <dbReference type="ChEBI" id="CHEBI:33384"/>
    </ligand>
</feature>
<feature type="binding site" evidence="1">
    <location>
        <position position="363"/>
    </location>
    <ligand>
        <name>Zn(2+)</name>
        <dbReference type="ChEBI" id="CHEBI:29105"/>
        <note>catalytic</note>
    </ligand>
</feature>
<feature type="binding site" evidence="1">
    <location>
        <position position="470"/>
    </location>
    <ligand>
        <name>Zn(2+)</name>
        <dbReference type="ChEBI" id="CHEBI:29105"/>
        <note>catalytic</note>
    </ligand>
</feature>
<feature type="binding site" evidence="1">
    <location>
        <position position="477"/>
    </location>
    <ligand>
        <name>ATP</name>
        <dbReference type="ChEBI" id="CHEBI:30616"/>
    </ligand>
</feature>